<comment type="function">
    <text evidence="1">Responsible for synthesis of pseudouridine from uracil-54 and uracil-55 in the psi GC loop of transfer RNAs.</text>
</comment>
<comment type="catalytic activity">
    <reaction evidence="1">
        <text>uridine(54) in tRNA = pseudouridine(54) in tRNA</text>
        <dbReference type="Rhea" id="RHEA:57876"/>
        <dbReference type="Rhea" id="RHEA-COMP:10193"/>
        <dbReference type="Rhea" id="RHEA-COMP:14141"/>
        <dbReference type="ChEBI" id="CHEBI:65314"/>
        <dbReference type="ChEBI" id="CHEBI:65315"/>
    </reaction>
</comment>
<comment type="catalytic activity">
    <reaction evidence="1">
        <text>uridine(55) in tRNA = pseudouridine(55) in tRNA</text>
        <dbReference type="Rhea" id="RHEA:42532"/>
        <dbReference type="Rhea" id="RHEA-COMP:10101"/>
        <dbReference type="Rhea" id="RHEA-COMP:10102"/>
        <dbReference type="ChEBI" id="CHEBI:65314"/>
        <dbReference type="ChEBI" id="CHEBI:65315"/>
        <dbReference type="EC" id="5.4.99.25"/>
    </reaction>
</comment>
<comment type="similarity">
    <text evidence="1">Belongs to the pseudouridine synthase Pus10 family.</text>
</comment>
<feature type="chain" id="PRO_0000407382" description="tRNA pseudouridine synthase Pus10">
    <location>
        <begin position="1"/>
        <end position="357"/>
    </location>
</feature>
<feature type="domain" description="THUMP" evidence="1">
    <location>
        <begin position="1"/>
        <end position="118"/>
    </location>
</feature>
<feature type="active site" description="Nucleophile" evidence="1">
    <location>
        <position position="187"/>
    </location>
</feature>
<feature type="binding site" evidence="1">
    <location>
        <position position="251"/>
    </location>
    <ligand>
        <name>substrate</name>
    </ligand>
</feature>
<feature type="binding site" evidence="1">
    <location>
        <position position="322"/>
    </location>
    <ligand>
        <name>substrate</name>
    </ligand>
</feature>
<reference key="1">
    <citation type="journal article" date="1997" name="Nature">
        <title>The complete genome sequence of the hyperthermophilic, sulphate-reducing archaeon Archaeoglobus fulgidus.</title>
        <authorList>
            <person name="Klenk H.-P."/>
            <person name="Clayton R.A."/>
            <person name="Tomb J.-F."/>
            <person name="White O."/>
            <person name="Nelson K.E."/>
            <person name="Ketchum K.A."/>
            <person name="Dodson R.J."/>
            <person name="Gwinn M.L."/>
            <person name="Hickey E.K."/>
            <person name="Peterson J.D."/>
            <person name="Richardson D.L."/>
            <person name="Kerlavage A.R."/>
            <person name="Graham D.E."/>
            <person name="Kyrpides N.C."/>
            <person name="Fleischmann R.D."/>
            <person name="Quackenbush J."/>
            <person name="Lee N.H."/>
            <person name="Sutton G.G."/>
            <person name="Gill S.R."/>
            <person name="Kirkness E.F."/>
            <person name="Dougherty B.A."/>
            <person name="McKenney K."/>
            <person name="Adams M.D."/>
            <person name="Loftus B.J."/>
            <person name="Peterson S.N."/>
            <person name="Reich C.I."/>
            <person name="McNeil L.K."/>
            <person name="Badger J.H."/>
            <person name="Glodek A."/>
            <person name="Zhou L."/>
            <person name="Overbeek R."/>
            <person name="Gocayne J.D."/>
            <person name="Weidman J.F."/>
            <person name="McDonald L.A."/>
            <person name="Utterback T.R."/>
            <person name="Cotton M.D."/>
            <person name="Spriggs T."/>
            <person name="Artiach P."/>
            <person name="Kaine B.P."/>
            <person name="Sykes S.M."/>
            <person name="Sadow P.W."/>
            <person name="D'Andrea K.P."/>
            <person name="Bowman C."/>
            <person name="Fujii C."/>
            <person name="Garland S.A."/>
            <person name="Mason T.M."/>
            <person name="Olsen G.J."/>
            <person name="Fraser C.M."/>
            <person name="Smith H.O."/>
            <person name="Woese C.R."/>
            <person name="Venter J.C."/>
        </authorList>
    </citation>
    <scope>NUCLEOTIDE SEQUENCE [LARGE SCALE GENOMIC DNA]</scope>
    <source>
        <strain>ATCC 49558 / DSM 4304 / JCM 9628 / NBRC 100126 / VC-16</strain>
    </source>
</reference>
<proteinExistence type="inferred from homology"/>
<name>PUS10_ARCFU</name>
<evidence type="ECO:0000255" key="1">
    <source>
        <dbReference type="HAMAP-Rule" id="MF_01893"/>
    </source>
</evidence>
<sequence>MNLCRECYGIIGEGVVAEKCEACCNAFDRVEEFAEEIVKKMSEYEFETFNVGSRVWGSLKALQEYLSLKGIEYEIKQRFNTKLARAIEEKTGSKRTLNPDITVLFDLETFTFELQIRPVFIYGRYLKRVRNISQTRWLCGYCNGEGCEVCNFTGKKYVSSVEELIAMPAVRLFKARDAKLHGAGREDVDARMLGTGRPFVLEVIEPRKRFVDLKELEEAINSQKWVAVRDLEYTDAEKVREVKTERHRKTYRAKVVFEEKVERERLIEALESLKGEIRQRTPMRVSHRRADRVRVRRLYDARLIHHTGRVAVVEFEAEAGLYIKELVSGDNGRTRPSLAEKVGVNARVDRLDVIAVS</sequence>
<gene>
    <name evidence="1" type="primary">pus10</name>
    <name type="ordered locus">AF_1152</name>
</gene>
<dbReference type="EC" id="5.4.99.25" evidence="1"/>
<dbReference type="EMBL" id="AE000782">
    <property type="protein sequence ID" value="AAB90092.1"/>
    <property type="molecule type" value="Genomic_DNA"/>
</dbReference>
<dbReference type="PIR" id="G69393">
    <property type="entry name" value="G69393"/>
</dbReference>
<dbReference type="RefSeq" id="WP_010878649.1">
    <property type="nucleotide sequence ID" value="NC_000917.1"/>
</dbReference>
<dbReference type="SMR" id="O29113"/>
<dbReference type="STRING" id="224325.AF_1152"/>
<dbReference type="PaxDb" id="224325-AF_1152"/>
<dbReference type="DNASU" id="1484376"/>
<dbReference type="EnsemblBacteria" id="AAB90092">
    <property type="protein sequence ID" value="AAB90092"/>
    <property type="gene ID" value="AF_1152"/>
</dbReference>
<dbReference type="GeneID" id="1484376"/>
<dbReference type="KEGG" id="afu:AF_1152"/>
<dbReference type="eggNOG" id="arCOG01015">
    <property type="taxonomic scope" value="Archaea"/>
</dbReference>
<dbReference type="HOGENOM" id="CLU_028780_2_0_2"/>
<dbReference type="OrthoDB" id="10348at2157"/>
<dbReference type="PhylomeDB" id="O29113"/>
<dbReference type="Proteomes" id="UP000002199">
    <property type="component" value="Chromosome"/>
</dbReference>
<dbReference type="GO" id="GO:0000049">
    <property type="term" value="F:tRNA binding"/>
    <property type="evidence" value="ECO:0007669"/>
    <property type="project" value="InterPro"/>
</dbReference>
<dbReference type="GO" id="GO:0160148">
    <property type="term" value="F:tRNA pseudouridine(55) synthase activity"/>
    <property type="evidence" value="ECO:0007669"/>
    <property type="project" value="UniProtKB-EC"/>
</dbReference>
<dbReference type="GO" id="GO:0031119">
    <property type="term" value="P:tRNA pseudouridine synthesis"/>
    <property type="evidence" value="ECO:0007669"/>
    <property type="project" value="UniProtKB-UniRule"/>
</dbReference>
<dbReference type="FunFam" id="3.30.70.2510:FF:000001">
    <property type="entry name" value="tRNA pseudouridine synthase Pus10"/>
    <property type="match status" value="1"/>
</dbReference>
<dbReference type="Gene3D" id="3.30.70.2510">
    <property type="match status" value="1"/>
</dbReference>
<dbReference type="Gene3D" id="3.30.70.3190">
    <property type="match status" value="1"/>
</dbReference>
<dbReference type="HAMAP" id="MF_01893">
    <property type="entry name" value="Pus10_arch"/>
    <property type="match status" value="1"/>
</dbReference>
<dbReference type="InterPro" id="IPR020103">
    <property type="entry name" value="PsdUridine_synth_cat_dom_sf"/>
</dbReference>
<dbReference type="InterPro" id="IPR005912">
    <property type="entry name" value="Pus10"/>
</dbReference>
<dbReference type="InterPro" id="IPR039894">
    <property type="entry name" value="Pus10-like"/>
</dbReference>
<dbReference type="InterPro" id="IPR048741">
    <property type="entry name" value="Pus10-like_C"/>
</dbReference>
<dbReference type="InterPro" id="IPR055174">
    <property type="entry name" value="Pus10_THUMP_arc"/>
</dbReference>
<dbReference type="InterPro" id="IPR004114">
    <property type="entry name" value="THUMP_dom"/>
</dbReference>
<dbReference type="NCBIfam" id="TIGR01213">
    <property type="entry name" value="pseudo_Pus10arc"/>
    <property type="match status" value="1"/>
</dbReference>
<dbReference type="PANTHER" id="PTHR21568">
    <property type="entry name" value="TRNA PSEUDOURIDINE SYNTHASE PUS10"/>
    <property type="match status" value="1"/>
</dbReference>
<dbReference type="PANTHER" id="PTHR21568:SF0">
    <property type="entry name" value="TRNA PSEUDOURIDINE SYNTHASE PUS10"/>
    <property type="match status" value="1"/>
</dbReference>
<dbReference type="Pfam" id="PF21238">
    <property type="entry name" value="Pus10_C"/>
    <property type="match status" value="1"/>
</dbReference>
<dbReference type="Pfam" id="PF22023">
    <property type="entry name" value="Pus10_THUMP_arc"/>
    <property type="match status" value="1"/>
</dbReference>
<dbReference type="SUPFAM" id="SSF55120">
    <property type="entry name" value="Pseudouridine synthase"/>
    <property type="match status" value="1"/>
</dbReference>
<dbReference type="PROSITE" id="PS51165">
    <property type="entry name" value="THUMP"/>
    <property type="match status" value="1"/>
</dbReference>
<keyword id="KW-0413">Isomerase</keyword>
<keyword id="KW-1185">Reference proteome</keyword>
<keyword id="KW-0694">RNA-binding</keyword>
<keyword id="KW-0819">tRNA processing</keyword>
<protein>
    <recommendedName>
        <fullName evidence="1">tRNA pseudouridine synthase Pus10</fullName>
        <ecNumber evidence="1">5.4.99.25</ecNumber>
    </recommendedName>
    <alternativeName>
        <fullName evidence="1">tRNA pseudouridine 54/55 synthase</fullName>
        <shortName evidence="1">Psi54/55 synthase</shortName>
    </alternativeName>
</protein>
<organism>
    <name type="scientific">Archaeoglobus fulgidus (strain ATCC 49558 / DSM 4304 / JCM 9628 / NBRC 100126 / VC-16)</name>
    <dbReference type="NCBI Taxonomy" id="224325"/>
    <lineage>
        <taxon>Archaea</taxon>
        <taxon>Methanobacteriati</taxon>
        <taxon>Methanobacteriota</taxon>
        <taxon>Archaeoglobi</taxon>
        <taxon>Archaeoglobales</taxon>
        <taxon>Archaeoglobaceae</taxon>
        <taxon>Archaeoglobus</taxon>
    </lineage>
</organism>
<accession>O29113</accession>